<keyword id="KW-0066">ATP synthesis</keyword>
<keyword id="KW-0067">ATP-binding</keyword>
<keyword id="KW-0375">Hydrogen ion transport</keyword>
<keyword id="KW-0406">Ion transport</keyword>
<keyword id="KW-0547">Nucleotide-binding</keyword>
<keyword id="KW-1185">Reference proteome</keyword>
<keyword id="KW-1278">Translocase</keyword>
<keyword id="KW-0813">Transport</keyword>
<protein>
    <recommendedName>
        <fullName evidence="1">V-type ATP synthase alpha chain</fullName>
        <ecNumber evidence="1">7.1.2.2</ecNumber>
    </recommendedName>
    <alternativeName>
        <fullName evidence="1">V-ATPase subunit A</fullName>
    </alternativeName>
</protein>
<gene>
    <name evidence="1" type="primary">atpA</name>
    <name type="ordered locus">Hore_19400</name>
</gene>
<comment type="function">
    <text evidence="1">Produces ATP from ADP in the presence of a proton gradient across the membrane. The V-type alpha chain is a catalytic subunit.</text>
</comment>
<comment type="catalytic activity">
    <reaction evidence="1">
        <text>ATP + H2O + 4 H(+)(in) = ADP + phosphate + 5 H(+)(out)</text>
        <dbReference type="Rhea" id="RHEA:57720"/>
        <dbReference type="ChEBI" id="CHEBI:15377"/>
        <dbReference type="ChEBI" id="CHEBI:15378"/>
        <dbReference type="ChEBI" id="CHEBI:30616"/>
        <dbReference type="ChEBI" id="CHEBI:43474"/>
        <dbReference type="ChEBI" id="CHEBI:456216"/>
        <dbReference type="EC" id="7.1.2.2"/>
    </reaction>
</comment>
<comment type="similarity">
    <text evidence="1">Belongs to the ATPase alpha/beta chains family.</text>
</comment>
<dbReference type="EC" id="7.1.2.2" evidence="1"/>
<dbReference type="EMBL" id="CP001098">
    <property type="protein sequence ID" value="ACL70687.1"/>
    <property type="molecule type" value="Genomic_DNA"/>
</dbReference>
<dbReference type="RefSeq" id="WP_015923656.1">
    <property type="nucleotide sequence ID" value="NC_011899.1"/>
</dbReference>
<dbReference type="SMR" id="B8CZG8"/>
<dbReference type="STRING" id="373903.Hore_19400"/>
<dbReference type="KEGG" id="hor:Hore_19400"/>
<dbReference type="eggNOG" id="COG1155">
    <property type="taxonomic scope" value="Bacteria"/>
</dbReference>
<dbReference type="HOGENOM" id="CLU_008162_3_1_9"/>
<dbReference type="OrthoDB" id="9803053at2"/>
<dbReference type="Proteomes" id="UP000000719">
    <property type="component" value="Chromosome"/>
</dbReference>
<dbReference type="GO" id="GO:0045259">
    <property type="term" value="C:proton-transporting ATP synthase complex"/>
    <property type="evidence" value="ECO:0007669"/>
    <property type="project" value="UniProtKB-ARBA"/>
</dbReference>
<dbReference type="GO" id="GO:0005524">
    <property type="term" value="F:ATP binding"/>
    <property type="evidence" value="ECO:0007669"/>
    <property type="project" value="UniProtKB-UniRule"/>
</dbReference>
<dbReference type="GO" id="GO:0046933">
    <property type="term" value="F:proton-transporting ATP synthase activity, rotational mechanism"/>
    <property type="evidence" value="ECO:0007669"/>
    <property type="project" value="UniProtKB-UniRule"/>
</dbReference>
<dbReference type="GO" id="GO:0046961">
    <property type="term" value="F:proton-transporting ATPase activity, rotational mechanism"/>
    <property type="evidence" value="ECO:0007669"/>
    <property type="project" value="InterPro"/>
</dbReference>
<dbReference type="GO" id="GO:0042777">
    <property type="term" value="P:proton motive force-driven plasma membrane ATP synthesis"/>
    <property type="evidence" value="ECO:0007669"/>
    <property type="project" value="UniProtKB-UniRule"/>
</dbReference>
<dbReference type="CDD" id="cd18111">
    <property type="entry name" value="ATP-synt_V_A-type_alpha_C"/>
    <property type="match status" value="1"/>
</dbReference>
<dbReference type="CDD" id="cd18119">
    <property type="entry name" value="ATP-synt_V_A-type_alpha_N"/>
    <property type="match status" value="1"/>
</dbReference>
<dbReference type="CDD" id="cd01134">
    <property type="entry name" value="V_A-ATPase_A"/>
    <property type="match status" value="1"/>
</dbReference>
<dbReference type="FunFam" id="2.40.30.20:FF:000002">
    <property type="entry name" value="V-type proton ATPase catalytic subunit A"/>
    <property type="match status" value="1"/>
</dbReference>
<dbReference type="Gene3D" id="2.40.30.20">
    <property type="match status" value="1"/>
</dbReference>
<dbReference type="Gene3D" id="2.40.50.100">
    <property type="match status" value="1"/>
</dbReference>
<dbReference type="Gene3D" id="1.10.1140.10">
    <property type="entry name" value="Bovine Mitochondrial F1-atpase, Atp Synthase Beta Chain, Chain D, domain 3"/>
    <property type="match status" value="1"/>
</dbReference>
<dbReference type="Gene3D" id="3.40.50.300">
    <property type="entry name" value="P-loop containing nucleotide triphosphate hydrolases"/>
    <property type="match status" value="1"/>
</dbReference>
<dbReference type="HAMAP" id="MF_00309">
    <property type="entry name" value="ATP_synth_A_arch"/>
    <property type="match status" value="1"/>
</dbReference>
<dbReference type="InterPro" id="IPR055190">
    <property type="entry name" value="ATP-synt_VA_C"/>
</dbReference>
<dbReference type="InterPro" id="IPR031686">
    <property type="entry name" value="ATP-synth_a_Xtn"/>
</dbReference>
<dbReference type="InterPro" id="IPR023366">
    <property type="entry name" value="ATP_synth_asu-like_sf"/>
</dbReference>
<dbReference type="InterPro" id="IPR020003">
    <property type="entry name" value="ATPase_a/bsu_AS"/>
</dbReference>
<dbReference type="InterPro" id="IPR004100">
    <property type="entry name" value="ATPase_F1/V1/A1_a/bsu_N"/>
</dbReference>
<dbReference type="InterPro" id="IPR036121">
    <property type="entry name" value="ATPase_F1/V1/A1_a/bsu_N_sf"/>
</dbReference>
<dbReference type="InterPro" id="IPR000194">
    <property type="entry name" value="ATPase_F1/V1/A1_a/bsu_nucl-bd"/>
</dbReference>
<dbReference type="InterPro" id="IPR024034">
    <property type="entry name" value="ATPase_F1/V1_b/a_C"/>
</dbReference>
<dbReference type="InterPro" id="IPR027417">
    <property type="entry name" value="P-loop_NTPase"/>
</dbReference>
<dbReference type="InterPro" id="IPR022878">
    <property type="entry name" value="V-ATPase_asu"/>
</dbReference>
<dbReference type="NCBIfam" id="NF003220">
    <property type="entry name" value="PRK04192.1"/>
    <property type="match status" value="1"/>
</dbReference>
<dbReference type="PANTHER" id="PTHR43607:SF1">
    <property type="entry name" value="H(+)-TRANSPORTING TWO-SECTOR ATPASE"/>
    <property type="match status" value="1"/>
</dbReference>
<dbReference type="PANTHER" id="PTHR43607">
    <property type="entry name" value="V-TYPE PROTON ATPASE CATALYTIC SUBUNIT A"/>
    <property type="match status" value="1"/>
</dbReference>
<dbReference type="Pfam" id="PF00006">
    <property type="entry name" value="ATP-synt_ab"/>
    <property type="match status" value="1"/>
</dbReference>
<dbReference type="Pfam" id="PF02874">
    <property type="entry name" value="ATP-synt_ab_N"/>
    <property type="match status" value="1"/>
</dbReference>
<dbReference type="Pfam" id="PF16886">
    <property type="entry name" value="ATP-synt_ab_Xtn"/>
    <property type="match status" value="1"/>
</dbReference>
<dbReference type="Pfam" id="PF22919">
    <property type="entry name" value="ATP-synt_VA_C"/>
    <property type="match status" value="1"/>
</dbReference>
<dbReference type="SUPFAM" id="SSF47917">
    <property type="entry name" value="C-terminal domain of alpha and beta subunits of F1 ATP synthase"/>
    <property type="match status" value="1"/>
</dbReference>
<dbReference type="SUPFAM" id="SSF50615">
    <property type="entry name" value="N-terminal domain of alpha and beta subunits of F1 ATP synthase"/>
    <property type="match status" value="1"/>
</dbReference>
<dbReference type="SUPFAM" id="SSF52540">
    <property type="entry name" value="P-loop containing nucleoside triphosphate hydrolases"/>
    <property type="match status" value="1"/>
</dbReference>
<dbReference type="PROSITE" id="PS00152">
    <property type="entry name" value="ATPASE_ALPHA_BETA"/>
    <property type="match status" value="1"/>
</dbReference>
<proteinExistence type="inferred from homology"/>
<reference key="1">
    <citation type="journal article" date="2009" name="PLoS ONE">
        <title>Genome analysis of the anaerobic thermohalophilic bacterium Halothermothrix orenii.</title>
        <authorList>
            <person name="Mavromatis K."/>
            <person name="Ivanova N."/>
            <person name="Anderson I."/>
            <person name="Lykidis A."/>
            <person name="Hooper S.D."/>
            <person name="Sun H."/>
            <person name="Kunin V."/>
            <person name="Lapidus A."/>
            <person name="Hugenholtz P."/>
            <person name="Patel B."/>
            <person name="Kyrpides N.C."/>
        </authorList>
    </citation>
    <scope>NUCLEOTIDE SEQUENCE [LARGE SCALE GENOMIC DNA]</scope>
    <source>
        <strain>H 168 / OCM 544 / DSM 9562</strain>
    </source>
</reference>
<name>VATA_HALOH</name>
<evidence type="ECO:0000255" key="1">
    <source>
        <dbReference type="HAMAP-Rule" id="MF_00309"/>
    </source>
</evidence>
<feature type="chain" id="PRO_1000132882" description="V-type ATP synthase alpha chain">
    <location>
        <begin position="1"/>
        <end position="590"/>
    </location>
</feature>
<feature type="binding site" evidence="1">
    <location>
        <begin position="234"/>
        <end position="241"/>
    </location>
    <ligand>
        <name>ATP</name>
        <dbReference type="ChEBI" id="CHEBI:30616"/>
    </ligand>
</feature>
<accession>B8CZG8</accession>
<sequence length="590" mass="66713">MDKKGEIVFVNGPVVKADKMNGFIMNELVYVGKERLIGEIIELEGDLATIQVYEETTEMQPGEPVFSTGSPLSVELGPGIIGNIFDGIQRPLPVIAEKTGSFIKRGIEVNPLDRDREWTVSVKVKLGDRVKPGQVVAEVPETSIVTHRVMVPPHLSGEVVEVVPNGKYTVDQEIVTVKDDKGNNHQIRLHQKWPVRRPRPCGERLPIKKPLLTGQRVFDTFFPLGMGGTAAIPGGFGAGKTMTQHQLAKWSSADIIVYVGCGERGNEMTDVLEEFPKLEDPSTGKSMMERTVLIANTSNMPVAAREASIYTGITIAEFYRDMGYNVALMADSTSRWAEALREISGRLEEMPAEEGFPAYLPSRLAEFYERAGYVKTLGQDREGSISLIGAVSPPGGDFSEPVTQNTKRYVRCFWALDKSLASARHFPAVNWLESYSEYLEDLSGWLKENINEDWIKLRNMAMELLKEEDRLQEIVKLVGEDVLPDNQRLILEVARLIKIGFLQQNAFSKVDRFATPEKQYWMLKIIMFLYEKARPLIKNNIPISRVKNNELFSEVIKMKENIPNGDLDKFKDLMARIEEYYNRLWENYQE</sequence>
<organism>
    <name type="scientific">Halothermothrix orenii (strain H 168 / OCM 544 / DSM 9562)</name>
    <dbReference type="NCBI Taxonomy" id="373903"/>
    <lineage>
        <taxon>Bacteria</taxon>
        <taxon>Bacillati</taxon>
        <taxon>Bacillota</taxon>
        <taxon>Clostridia</taxon>
        <taxon>Halanaerobiales</taxon>
        <taxon>Halothermotrichaceae</taxon>
        <taxon>Halothermothrix</taxon>
    </lineage>
</organism>